<comment type="function">
    <text evidence="1">Binds to DNA and alters its conformation. May be involved in regulation of gene expression, nucleoid organization and DNA protection.</text>
</comment>
<comment type="subunit">
    <text evidence="1">Homodimer.</text>
</comment>
<comment type="subcellular location">
    <subcellularLocation>
        <location evidence="1">Cytoplasm</location>
        <location evidence="1">Nucleoid</location>
    </subcellularLocation>
</comment>
<comment type="similarity">
    <text evidence="1">Belongs to the YbaB/EbfC family.</text>
</comment>
<dbReference type="EMBL" id="CP000569">
    <property type="protein sequence ID" value="ABN73183.1"/>
    <property type="molecule type" value="Genomic_DNA"/>
</dbReference>
<dbReference type="RefSeq" id="WP_005600053.1">
    <property type="nucleotide sequence ID" value="NC_009053.1"/>
</dbReference>
<dbReference type="SMR" id="A3MYE7"/>
<dbReference type="STRING" id="416269.APL_0075"/>
<dbReference type="EnsemblBacteria" id="ABN73183">
    <property type="protein sequence ID" value="ABN73183"/>
    <property type="gene ID" value="APL_0075"/>
</dbReference>
<dbReference type="KEGG" id="apl:APL_0075"/>
<dbReference type="eggNOG" id="COG0718">
    <property type="taxonomic scope" value="Bacteria"/>
</dbReference>
<dbReference type="HOGENOM" id="CLU_140930_0_0_6"/>
<dbReference type="Proteomes" id="UP000001432">
    <property type="component" value="Chromosome"/>
</dbReference>
<dbReference type="GO" id="GO:0043590">
    <property type="term" value="C:bacterial nucleoid"/>
    <property type="evidence" value="ECO:0007669"/>
    <property type="project" value="UniProtKB-UniRule"/>
</dbReference>
<dbReference type="GO" id="GO:0005829">
    <property type="term" value="C:cytosol"/>
    <property type="evidence" value="ECO:0007669"/>
    <property type="project" value="TreeGrafter"/>
</dbReference>
<dbReference type="GO" id="GO:0003677">
    <property type="term" value="F:DNA binding"/>
    <property type="evidence" value="ECO:0007669"/>
    <property type="project" value="UniProtKB-UniRule"/>
</dbReference>
<dbReference type="FunFam" id="3.30.1310.10:FF:000001">
    <property type="entry name" value="Nucleoid-associated protein YbaB"/>
    <property type="match status" value="1"/>
</dbReference>
<dbReference type="Gene3D" id="3.30.1310.10">
    <property type="entry name" value="Nucleoid-associated protein YbaB-like domain"/>
    <property type="match status" value="1"/>
</dbReference>
<dbReference type="HAMAP" id="MF_00274">
    <property type="entry name" value="DNA_YbaB_EbfC"/>
    <property type="match status" value="1"/>
</dbReference>
<dbReference type="InterPro" id="IPR036894">
    <property type="entry name" value="YbaB-like_sf"/>
</dbReference>
<dbReference type="InterPro" id="IPR004401">
    <property type="entry name" value="YbaB/EbfC"/>
</dbReference>
<dbReference type="NCBIfam" id="TIGR00103">
    <property type="entry name" value="DNA_YbaB_EbfC"/>
    <property type="match status" value="1"/>
</dbReference>
<dbReference type="PANTHER" id="PTHR33449">
    <property type="entry name" value="NUCLEOID-ASSOCIATED PROTEIN YBAB"/>
    <property type="match status" value="1"/>
</dbReference>
<dbReference type="PANTHER" id="PTHR33449:SF1">
    <property type="entry name" value="NUCLEOID-ASSOCIATED PROTEIN YBAB"/>
    <property type="match status" value="1"/>
</dbReference>
<dbReference type="Pfam" id="PF02575">
    <property type="entry name" value="YbaB_DNA_bd"/>
    <property type="match status" value="1"/>
</dbReference>
<dbReference type="PIRSF" id="PIRSF004555">
    <property type="entry name" value="UCP004555"/>
    <property type="match status" value="1"/>
</dbReference>
<dbReference type="SUPFAM" id="SSF82607">
    <property type="entry name" value="YbaB-like"/>
    <property type="match status" value="1"/>
</dbReference>
<keyword id="KW-0963">Cytoplasm</keyword>
<keyword id="KW-0238">DNA-binding</keyword>
<keyword id="KW-1185">Reference proteome</keyword>
<proteinExistence type="inferred from homology"/>
<evidence type="ECO:0000255" key="1">
    <source>
        <dbReference type="HAMAP-Rule" id="MF_00274"/>
    </source>
</evidence>
<evidence type="ECO:0000256" key="2">
    <source>
        <dbReference type="SAM" id="MobiDB-lite"/>
    </source>
</evidence>
<accession>A3MYE7</accession>
<reference key="1">
    <citation type="journal article" date="2008" name="J. Bacteriol.">
        <title>The complete genome sequence of Actinobacillus pleuropneumoniae L20 (serotype 5b).</title>
        <authorList>
            <person name="Foote S.J."/>
            <person name="Bosse J.T."/>
            <person name="Bouevitch A.B."/>
            <person name="Langford P.R."/>
            <person name="Young N.M."/>
            <person name="Nash J.H.E."/>
        </authorList>
    </citation>
    <scope>NUCLEOTIDE SEQUENCE [LARGE SCALE GENOMIC DNA]</scope>
    <source>
        <strain>L20</strain>
    </source>
</reference>
<sequence length="109" mass="12018">MFGKGGLGGLMKQAQQMQERMQKMQEEIAQLEVTGESGAGLVKVTINGAHNCRRIEIDPSLMEDDKEMVEDLVAAAFNDAVRRAEEMQKEKMASVTAGMQLPPGMKFPF</sequence>
<gene>
    <name type="ordered locus">APL_0075</name>
</gene>
<feature type="chain" id="PRO_1000003675" description="Nucleoid-associated protein APL_0075">
    <location>
        <begin position="1"/>
        <end position="109"/>
    </location>
</feature>
<feature type="region of interest" description="Disordered" evidence="2">
    <location>
        <begin position="1"/>
        <end position="21"/>
    </location>
</feature>
<feature type="compositionally biased region" description="Low complexity" evidence="2">
    <location>
        <begin position="10"/>
        <end position="19"/>
    </location>
</feature>
<organism>
    <name type="scientific">Actinobacillus pleuropneumoniae serotype 5b (strain L20)</name>
    <dbReference type="NCBI Taxonomy" id="416269"/>
    <lineage>
        <taxon>Bacteria</taxon>
        <taxon>Pseudomonadati</taxon>
        <taxon>Pseudomonadota</taxon>
        <taxon>Gammaproteobacteria</taxon>
        <taxon>Pasteurellales</taxon>
        <taxon>Pasteurellaceae</taxon>
        <taxon>Actinobacillus</taxon>
    </lineage>
</organism>
<name>Y075_ACTP2</name>
<protein>
    <recommendedName>
        <fullName evidence="1">Nucleoid-associated protein APL_0075</fullName>
    </recommendedName>
</protein>